<evidence type="ECO:0000255" key="1"/>
<evidence type="ECO:0000256" key="2">
    <source>
        <dbReference type="SAM" id="MobiDB-lite"/>
    </source>
</evidence>
<evidence type="ECO:0000269" key="3">
    <source>
    </source>
</evidence>
<evidence type="ECO:0000305" key="4"/>
<feature type="signal peptide" evidence="1">
    <location>
        <begin position="1"/>
        <end position="19"/>
    </location>
</feature>
<feature type="chain" id="PRO_0000417928" description="Uncharacterized shell protein 8" evidence="1">
    <location>
        <begin position="20"/>
        <end position="79"/>
    </location>
</feature>
<feature type="region of interest" description="Disordered" evidence="2">
    <location>
        <begin position="52"/>
        <end position="71"/>
    </location>
</feature>
<feature type="compositionally biased region" description="Polar residues" evidence="2">
    <location>
        <begin position="58"/>
        <end position="71"/>
    </location>
</feature>
<protein>
    <recommendedName>
        <fullName>Uncharacterized shell protein 8</fullName>
    </recommendedName>
    <alternativeName>
        <fullName>Nacre uncharacterized shell protein 6</fullName>
        <shortName>NUSP6</shortName>
    </alternativeName>
</protein>
<proteinExistence type="evidence at protein level"/>
<keyword id="KW-0903">Direct protein sequencing</keyword>
<keyword id="KW-0964">Secreted</keyword>
<keyword id="KW-0732">Signal</keyword>
<organism>
    <name type="scientific">Margaritifera margaritifera</name>
    <name type="common">Freshwater pearl mussel</name>
    <dbReference type="NCBI Taxonomy" id="102329"/>
    <lineage>
        <taxon>Eukaryota</taxon>
        <taxon>Metazoa</taxon>
        <taxon>Spiralia</taxon>
        <taxon>Lophotrochozoa</taxon>
        <taxon>Mollusca</taxon>
        <taxon>Bivalvia</taxon>
        <taxon>Autobranchia</taxon>
        <taxon>Pteriomorphia</taxon>
        <taxon>Pterioida</taxon>
        <taxon>Pterioidea</taxon>
        <taxon>Pteriidae</taxon>
        <taxon>Pinctada</taxon>
    </lineage>
</organism>
<sequence length="79" mass="8767">MKYVALAFVLSLVILQISAQGGGLTSLLLQKEYMPDNWFDYKLAQMLLGGTRGRKSRTQSGRNQGKSTSDSWLWLALAS</sequence>
<comment type="subcellular location">
    <subcellularLocation>
        <location evidence="3">Secreted</location>
    </subcellularLocation>
</comment>
<comment type="tissue specificity">
    <text evidence="3">Nacreous layer of shell (at protein level). Expressed primarily in the mantle with highest level in the mantle pallium and lower level in the mantle edge.</text>
</comment>
<name>USP8_PINMG</name>
<dbReference type="EMBL" id="HE610404">
    <property type="protein sequence ID" value="CCE46178.1"/>
    <property type="molecule type" value="mRNA"/>
</dbReference>
<dbReference type="GO" id="GO:0005576">
    <property type="term" value="C:extracellular region"/>
    <property type="evidence" value="ECO:0007669"/>
    <property type="project" value="UniProtKB-SubCell"/>
</dbReference>
<accession>H2A0N7</accession>
<reference evidence="4" key="1">
    <citation type="journal article" date="2010" name="BMC Genomics">
        <title>Transcriptome and proteome analysis of Pinctada margaritifera calcifying mantle and shell: focus on biomineralization.</title>
        <authorList>
            <person name="Joubert C."/>
            <person name="Piquemal D."/>
            <person name="Marie B."/>
            <person name="Manchon L."/>
            <person name="Pierrat F."/>
            <person name="Zanella-Cleon I."/>
            <person name="Cochennec-Laureau N."/>
            <person name="Gueguen Y."/>
            <person name="Montagnani C."/>
        </authorList>
    </citation>
    <scope>NUCLEOTIDE SEQUENCE [MRNA]</scope>
    <scope>IDENTIFICATION</scope>
    <source>
        <tissue>Mantle</tissue>
    </source>
</reference>
<reference key="2">
    <citation type="journal article" date="2012" name="Proc. Natl. Acad. Sci. U.S.A.">
        <title>Different secretory repertoires control the biomineralization processes of prism and nacre deposition of the pearl oyster shell.</title>
        <authorList>
            <person name="Marie B."/>
            <person name="Joubert C."/>
            <person name="Tayale A."/>
            <person name="Zanella-Cleon I."/>
            <person name="Belliard C."/>
            <person name="Piquemal D."/>
            <person name="Cochennec-Laureau N."/>
            <person name="Marin F."/>
            <person name="Gueguen Y."/>
            <person name="Montagnani C."/>
        </authorList>
    </citation>
    <scope>PROTEIN SEQUENCE OF 32-52</scope>
    <scope>SUBCELLULAR LOCATION</scope>
    <scope>TISSUE SPECIFICITY</scope>
    <source>
        <tissue>Shell</tissue>
    </source>
</reference>